<sequence>MFNKSFGTPFGGSTGGFGTTSTFGQNTGFGTTSGGAFGTSAFGSSNNTGGLFGNSQTKPGGLFGTSSFSQPATSTSTGFGFGTSTGTSNSLFGTASTGTSLFSSQNNAFAQNKPTGFGNFGTSTSSGGLFGTTNTTSNPFGSTSGSLFGPSSFTAAPTGTTIKFNPPTGTDTMVKAGVSTNISTKHQCITAMKEYESKSLEELRLEDYQANRKGPQNQVGGGTTAGLFGSSPATSSATGLFSSSTTNSAFSYGQNKTAFGTSTTGFGTNPGGLFGQQNQQTTSLFSKPFGQATTTPNTGFSFGNTSTLGQPSTNTMGLFGVTQASQPGGLFGTATNTSTGTAFGTGTGLFGQPNTGFGAVGSTLFGNNKLTTFGTSTTSAPSFGTTSGGLFGNKPTLTLGTNTNTSNFGFGTNNSGSSIFGSKPAAGTLGTGLGTGFGTALGAGQASLFGNNQPKIGGPLGTGAFGAPGFNTSTAILGFGAPQAPVALTDPNASAAQQAVLQQHLNSLTYSPFGDSPLFRNPMSDPKKKEERLKPTNPAAQKALTTPTHYKLTPRPATRVRPKALQTTGTAKSHLFDGLDDDEPSLANGAFMPKKSIKKLVLKNLNNSNLFSPVNHDSEDLASPSEYPENGERFSFLSKPVDENNQQDGEDDSLVSRFYTNPIAKPIPQTPESVGNKNNSSSNVEDTIVALNMRAALRNGLEGSSEETSFHDESLQDDREEIENNAYHIHPAGIVLTKVGYYTIPSMDDLAKITNEKGECIVSDFTIGRKGYGSIYFEGDVNLTNLNLDDIVHIRRKEVIVYVDDNQKPPVGEGLNRKAEVTLDGVWPTDKTSRCLIKSPDRLADINYEGRLEAVSRKQGAQFKEYRPETGSWVFKVSHFSKYGLQDSDEEEEEHPPKTTSKKLKTAPLPPAGQATTFQMTLNGKPAPPPQSQSPEVEQLGRVVELDSDMVDITQEPVPDSVLEESVPEDQEPVSASTHIASSLGINPHVLQIMKASLLVDEEDVDAMDQRFGHIPSKGETVQEICSPRLPISASHSSKSRSIVGGLLQSKFASGTFLSPSASVQECRTPRTSSRMNIPSTSPWSVPLPLATVFTVPSPAPEVQLKTVGIRRQPGLVPLEKSITYGKGKLLMDMALFMGRSFRVGWGPNWTLANSGEQLHGSHELENHQVADSMEYGFLPNPVAVKSLSESPFKVHLEKLGLRQRKLDEDLQLYQTPLELKLKHSTVHVDELCPLIVPNPGVSVIHDYADWVKDSPGDFLELPIVKHWSLTWTLCEALWGHLKELDGQLDEPSEYIQTLERRRAFSRWLSHTAAPQIEEEVSLTRRDSPVEAVFSYLTGSRISGACCLAQQSGDHRLALLLSQLVGSQSVRELLTMQLADWHQLQADSFIHDERLRIFALLAGKPVWQLSEQKQINVCSQLDWKRTLAIHLWYLLPPTASISRALSMYEEAFQNTPEGDKYACSPLPSYLEGCGCMVEEEKDSRRPLQDVCFHLLKLYSDRHYELNQLLEPRSITADPLDYRLSWHLWEVLRALNYTHLSEQCEGVLQASYAGQLESEGLWEWAIFVFLHIDNSGMREKAVRELLTRHCQLSETPESWAKEAFLTQKLCVPAEWIHEAKAVRAHMESNKHLEALYLFKAGHWNRCHKLVIRHLASDAIINENYDYLKGFLEDLAPPERSSLIQDWETSGLVYLDYIRVIEMLHRIQQVDCSGYELEHLHTKVTSLCNRIEQIPCYNAKDRLAQSDMAKRVANLLRVVLSLQHAPDATSNSTPDPQRVPLRLLAPHIGRLPMPEDYALEELRGLTQSYLRELTVGSQ</sequence>
<organism>
    <name type="scientific">Mus musculus</name>
    <name type="common">Mouse</name>
    <dbReference type="NCBI Taxonomy" id="10090"/>
    <lineage>
        <taxon>Eukaryota</taxon>
        <taxon>Metazoa</taxon>
        <taxon>Chordata</taxon>
        <taxon>Craniata</taxon>
        <taxon>Vertebrata</taxon>
        <taxon>Euteleostomi</taxon>
        <taxon>Mammalia</taxon>
        <taxon>Eutheria</taxon>
        <taxon>Euarchontoglires</taxon>
        <taxon>Glires</taxon>
        <taxon>Rodentia</taxon>
        <taxon>Myomorpha</taxon>
        <taxon>Muroidea</taxon>
        <taxon>Muridae</taxon>
        <taxon>Murinae</taxon>
        <taxon>Mus</taxon>
        <taxon>Mus</taxon>
    </lineage>
</organism>
<feature type="chain" id="PRO_0000421837" description="Nuclear pore complex protein Nup98">
    <location>
        <begin position="1"/>
        <end position="880"/>
    </location>
</feature>
<feature type="chain" id="PRO_0000421838" description="Nuclear pore complex protein Nup96">
    <location>
        <begin position="881"/>
        <end position="1816"/>
    </location>
</feature>
<feature type="domain" description="Peptidase S59" evidence="3">
    <location>
        <begin position="738"/>
        <end position="880"/>
    </location>
</feature>
<feature type="region of interest" description="FG repeats 1">
    <location>
        <begin position="1"/>
        <end position="156"/>
    </location>
</feature>
<feature type="region of interest" description="GLEBS; interaction with RAE1" evidence="1">
    <location>
        <begin position="157"/>
        <end position="213"/>
    </location>
</feature>
<feature type="region of interest" description="FG repeats 2">
    <location>
        <begin position="214"/>
        <end position="480"/>
    </location>
</feature>
<feature type="region of interest" description="Disordered" evidence="4">
    <location>
        <begin position="512"/>
        <end position="535"/>
    </location>
</feature>
<feature type="region of interest" description="Disordered" evidence="4">
    <location>
        <begin position="663"/>
        <end position="682"/>
    </location>
</feature>
<feature type="region of interest" description="Disordered" evidence="4">
    <location>
        <begin position="886"/>
        <end position="937"/>
    </location>
</feature>
<feature type="compositionally biased region" description="Basic and acidic residues" evidence="4">
    <location>
        <begin position="525"/>
        <end position="534"/>
    </location>
</feature>
<feature type="compositionally biased region" description="Low complexity" evidence="4">
    <location>
        <begin position="673"/>
        <end position="682"/>
    </location>
</feature>
<feature type="active site" description="Nucleophile" evidence="2">
    <location>
        <position position="881"/>
    </location>
</feature>
<feature type="site" description="Cleavage; by autolysis" evidence="2">
    <location>
        <begin position="880"/>
        <end position="881"/>
    </location>
</feature>
<feature type="modified residue" description="Phosphoserine" evidence="2">
    <location>
        <position position="524"/>
    </location>
</feature>
<feature type="modified residue" description="N6-acetyllysine; alternate" evidence="2">
    <location>
        <position position="603"/>
    </location>
</feature>
<feature type="modified residue" description="Phosphoserine" evidence="9">
    <location>
        <position position="608"/>
    </location>
</feature>
<feature type="modified residue" description="Phosphoserine" evidence="9">
    <location>
        <position position="612"/>
    </location>
</feature>
<feature type="modified residue" description="Phosphoserine" evidence="9">
    <location>
        <position position="618"/>
    </location>
</feature>
<feature type="modified residue" description="Phosphoserine" evidence="9">
    <location>
        <position position="623"/>
    </location>
</feature>
<feature type="modified residue" description="Phosphoserine" evidence="2">
    <location>
        <position position="625"/>
    </location>
</feature>
<feature type="modified residue" description="Phosphoserine" evidence="8 9">
    <location>
        <position position="653"/>
    </location>
</feature>
<feature type="modified residue" description="Phosphothreonine" evidence="8">
    <location>
        <position position="670"/>
    </location>
</feature>
<feature type="modified residue" description="Phosphoserine" evidence="2">
    <location>
        <position position="673"/>
    </location>
</feature>
<feature type="modified residue" description="Phosphoserine" evidence="9">
    <location>
        <position position="680"/>
    </location>
</feature>
<feature type="modified residue" description="Phosphoserine" evidence="2">
    <location>
        <position position="681"/>
    </location>
</feature>
<feature type="modified residue" description="Phosphoserine" evidence="2">
    <location>
        <position position="839"/>
    </location>
</feature>
<feature type="modified residue" description="Phosphoserine" evidence="7 8 9">
    <location>
        <position position="888"/>
    </location>
</feature>
<feature type="modified residue" description="Phosphoserine" evidence="2">
    <location>
        <position position="934"/>
    </location>
</feature>
<feature type="modified residue" description="Phosphoserine" evidence="7 9">
    <location>
        <position position="1027"/>
    </location>
</feature>
<feature type="modified residue" description="Phosphoserine" evidence="2">
    <location>
        <position position="1042"/>
    </location>
</feature>
<feature type="modified residue" description="Phosphoserine" evidence="9">
    <location>
        <position position="1059"/>
    </location>
</feature>
<feature type="modified residue" description="Phosphoserine" evidence="9">
    <location>
        <position position="1063"/>
    </location>
</feature>
<feature type="modified residue" description="Phosphothreonine" evidence="2">
    <location>
        <position position="1069"/>
    </location>
</feature>
<feature type="modified residue" description="Phosphoserine" evidence="9">
    <location>
        <position position="1328"/>
    </location>
</feature>
<feature type="modified residue" description="Phosphothreonine" evidence="9">
    <location>
        <position position="1771"/>
    </location>
</feature>
<feature type="cross-link" description="Glycyl lysine isopeptide (Lys-Gly) (interchain with G-Cter in SUMO2)" evidence="2">
    <location>
        <position position="563"/>
    </location>
</feature>
<feature type="cross-link" description="Glycyl lysine isopeptide (Lys-Gly) (interchain with G-Cter in SUMO2); alternate" evidence="2">
    <location>
        <position position="603"/>
    </location>
</feature>
<feature type="cross-link" description="Glycyl lysine isopeptide (Lys-Gly) (interchain with G-Cter in SUMO2)" evidence="2">
    <location>
        <position position="665"/>
    </location>
</feature>
<feature type="mutagenesis site" description="Reduces interaction with NUP88." evidence="5">
    <original>K</original>
    <variation>A</variation>
    <location>
        <position position="831"/>
    </location>
</feature>
<feature type="strand" evidence="11">
    <location>
        <begin position="168"/>
        <end position="172"/>
    </location>
</feature>
<feature type="strand" evidence="11">
    <location>
        <begin position="175"/>
        <end position="177"/>
    </location>
</feature>
<feature type="strand" evidence="11">
    <location>
        <begin position="181"/>
        <end position="186"/>
    </location>
</feature>
<feature type="helix" evidence="11">
    <location>
        <begin position="189"/>
        <end position="191"/>
    </location>
</feature>
<feature type="turn" evidence="11">
    <location>
        <begin position="193"/>
        <end position="197"/>
    </location>
</feature>
<feature type="helix" evidence="11">
    <location>
        <begin position="200"/>
        <end position="209"/>
    </location>
</feature>
<feature type="strand" evidence="10">
    <location>
        <begin position="741"/>
        <end position="745"/>
    </location>
</feature>
<feature type="helix" evidence="10">
    <location>
        <begin position="749"/>
        <end position="752"/>
    </location>
</feature>
<feature type="strand" evidence="10">
    <location>
        <begin position="763"/>
        <end position="769"/>
    </location>
</feature>
<feature type="turn" evidence="10">
    <location>
        <begin position="770"/>
        <end position="772"/>
    </location>
</feature>
<feature type="strand" evidence="10">
    <location>
        <begin position="773"/>
        <end position="780"/>
    </location>
</feature>
<feature type="helix" evidence="10">
    <location>
        <begin position="788"/>
        <end position="790"/>
    </location>
</feature>
<feature type="strand" evidence="10">
    <location>
        <begin position="792"/>
        <end position="795"/>
    </location>
</feature>
<feature type="strand" evidence="10">
    <location>
        <begin position="798"/>
        <end position="807"/>
    </location>
</feature>
<feature type="strand" evidence="10">
    <location>
        <begin position="813"/>
        <end position="815"/>
    </location>
</feature>
<feature type="strand" evidence="10">
    <location>
        <begin position="819"/>
        <end position="823"/>
    </location>
</feature>
<feature type="turn" evidence="10">
    <location>
        <begin position="831"/>
        <end position="833"/>
    </location>
</feature>
<feature type="helix" evidence="10">
    <location>
        <begin position="840"/>
        <end position="845"/>
    </location>
</feature>
<feature type="helix" evidence="10">
    <location>
        <begin position="848"/>
        <end position="857"/>
    </location>
</feature>
<feature type="turn" evidence="10">
    <location>
        <begin position="858"/>
        <end position="860"/>
    </location>
</feature>
<feature type="strand" evidence="10">
    <location>
        <begin position="862"/>
        <end position="867"/>
    </location>
</feature>
<feature type="turn" evidence="10">
    <location>
        <begin position="868"/>
        <end position="871"/>
    </location>
</feature>
<feature type="strand" evidence="10">
    <location>
        <begin position="872"/>
        <end position="878"/>
    </location>
</feature>
<name>NUP98_MOUSE</name>
<proteinExistence type="evidence at protein level"/>
<protein>
    <recommendedName>
        <fullName>Nuclear pore complex protein Nup98-Nup96</fullName>
        <ecNumber evidence="2">3.4.21.-</ecNumber>
    </recommendedName>
    <component>
        <recommendedName>
            <fullName>Nuclear pore complex protein Nup98</fullName>
        </recommendedName>
        <alternativeName>
            <fullName>98 kDa nucleoporin</fullName>
        </alternativeName>
        <alternativeName>
            <fullName>Nucleoporin Nup98</fullName>
            <shortName>Nup98</shortName>
        </alternativeName>
    </component>
    <component>
        <recommendedName>
            <fullName>Nuclear pore complex protein Nup96</fullName>
        </recommendedName>
        <alternativeName>
            <fullName>96 kDa nucleoporin</fullName>
        </alternativeName>
        <alternativeName>
            <fullName>Nucleoporin Nup96</fullName>
            <shortName>Nup96</shortName>
        </alternativeName>
    </component>
</protein>
<evidence type="ECO:0000250" key="1"/>
<evidence type="ECO:0000250" key="2">
    <source>
        <dbReference type="UniProtKB" id="P52948"/>
    </source>
</evidence>
<evidence type="ECO:0000255" key="3">
    <source>
        <dbReference type="PROSITE-ProRule" id="PRU00765"/>
    </source>
</evidence>
<evidence type="ECO:0000256" key="4">
    <source>
        <dbReference type="SAM" id="MobiDB-lite"/>
    </source>
</evidence>
<evidence type="ECO:0000269" key="5">
    <source>
    </source>
</evidence>
<evidence type="ECO:0000305" key="6"/>
<evidence type="ECO:0007744" key="7">
    <source>
    </source>
</evidence>
<evidence type="ECO:0007744" key="8">
    <source>
    </source>
</evidence>
<evidence type="ECO:0007744" key="9">
    <source>
    </source>
</evidence>
<evidence type="ECO:0007829" key="10">
    <source>
        <dbReference type="PDB" id="3TKN"/>
    </source>
</evidence>
<evidence type="ECO:0007829" key="11">
    <source>
        <dbReference type="PDB" id="7BYF"/>
    </source>
</evidence>
<dbReference type="EC" id="3.4.21.-" evidence="2"/>
<dbReference type="EMBL" id="AC118592">
    <property type="status" value="NOT_ANNOTATED_CDS"/>
    <property type="molecule type" value="Genomic_DNA"/>
</dbReference>
<dbReference type="EMBL" id="BC050911">
    <property type="protein sequence ID" value="AAH50911.1"/>
    <property type="status" value="ALT_SEQ"/>
    <property type="molecule type" value="mRNA"/>
</dbReference>
<dbReference type="EMBL" id="BC057608">
    <property type="protein sequence ID" value="AAH57608.1"/>
    <property type="status" value="ALT_SEQ"/>
    <property type="molecule type" value="mRNA"/>
</dbReference>
<dbReference type="EMBL" id="BC078630">
    <property type="protein sequence ID" value="AAH78630.1"/>
    <property type="molecule type" value="mRNA"/>
</dbReference>
<dbReference type="EMBL" id="BC112912">
    <property type="protein sequence ID" value="AAI12913.1"/>
    <property type="status" value="ALT_SEQ"/>
    <property type="molecule type" value="mRNA"/>
</dbReference>
<dbReference type="CCDS" id="CCDS85358.1"/>
<dbReference type="RefSeq" id="NP_001274093.1">
    <property type="nucleotide sequence ID" value="NM_001287164.1"/>
</dbReference>
<dbReference type="RefSeq" id="NP_001274094.1">
    <property type="nucleotide sequence ID" value="NM_001287165.1"/>
</dbReference>
<dbReference type="RefSeq" id="NP_075355.1">
    <property type="nucleotide sequence ID" value="NM_022979.2"/>
</dbReference>
<dbReference type="PDB" id="3TKN">
    <property type="method" value="X-ray"/>
    <property type="resolution" value="3.40 A"/>
    <property type="chains" value="C/F/I=732-880"/>
</dbReference>
<dbReference type="PDB" id="7BYF">
    <property type="method" value="X-ray"/>
    <property type="resolution" value="2.50 A"/>
    <property type="chains" value="B/E=157-213"/>
</dbReference>
<dbReference type="PDBsum" id="3TKN"/>
<dbReference type="PDBsum" id="7BYF"/>
<dbReference type="SMR" id="Q6PFD9"/>
<dbReference type="BioGRID" id="234738">
    <property type="interactions" value="69"/>
</dbReference>
<dbReference type="ComplexPortal" id="CPX-4474">
    <property type="entry name" value="Nuclear pore complex"/>
</dbReference>
<dbReference type="FunCoup" id="Q6PFD9">
    <property type="interactions" value="4770"/>
</dbReference>
<dbReference type="IntAct" id="Q6PFD9">
    <property type="interactions" value="59"/>
</dbReference>
<dbReference type="MINT" id="Q6PFD9"/>
<dbReference type="STRING" id="10090.ENSMUSP00000148115"/>
<dbReference type="MEROPS" id="S59.001"/>
<dbReference type="GlyGen" id="Q6PFD9">
    <property type="glycosylation" value="8 sites, 1 O-linked glycan (8 sites)"/>
</dbReference>
<dbReference type="iPTMnet" id="Q6PFD9"/>
<dbReference type="PhosphoSitePlus" id="Q6PFD9"/>
<dbReference type="SwissPalm" id="Q6PFD9"/>
<dbReference type="jPOST" id="Q6PFD9"/>
<dbReference type="PaxDb" id="10090-ENSMUSP00000068530"/>
<dbReference type="PeptideAtlas" id="Q6PFD9"/>
<dbReference type="ProteomicsDB" id="287864"/>
<dbReference type="Pumba" id="Q6PFD9"/>
<dbReference type="DNASU" id="269966"/>
<dbReference type="GeneID" id="269966"/>
<dbReference type="KEGG" id="mmu:269966"/>
<dbReference type="UCSC" id="uc009iqx.2">
    <property type="organism name" value="mouse"/>
</dbReference>
<dbReference type="AGR" id="MGI:109404"/>
<dbReference type="CTD" id="4928"/>
<dbReference type="MGI" id="MGI:109404">
    <property type="gene designation" value="Nup98"/>
</dbReference>
<dbReference type="eggNOG" id="KOG0845">
    <property type="taxonomic scope" value="Eukaryota"/>
</dbReference>
<dbReference type="InParanoid" id="Q6PFD9"/>
<dbReference type="OrthoDB" id="3797628at2759"/>
<dbReference type="TreeFam" id="TF343335"/>
<dbReference type="Reactome" id="R-MMU-141444">
    <property type="pathway name" value="Amplification of signal from unattached kinetochores via a MAD2 inhibitory signal"/>
</dbReference>
<dbReference type="Reactome" id="R-MMU-159227">
    <property type="pathway name" value="Transport of the SLBP independent Mature mRNA"/>
</dbReference>
<dbReference type="Reactome" id="R-MMU-159230">
    <property type="pathway name" value="Transport of the SLBP Dependant Mature mRNA"/>
</dbReference>
<dbReference type="Reactome" id="R-MMU-159231">
    <property type="pathway name" value="Transport of Mature mRNA Derived from an Intronless Transcript"/>
</dbReference>
<dbReference type="Reactome" id="R-MMU-159236">
    <property type="pathway name" value="Transport of Mature mRNA derived from an Intron-Containing Transcript"/>
</dbReference>
<dbReference type="Reactome" id="R-MMU-170822">
    <property type="pathway name" value="Regulation of Glucokinase by Glucokinase Regulatory Protein"/>
</dbReference>
<dbReference type="Reactome" id="R-MMU-191859">
    <property type="pathway name" value="snRNP Assembly"/>
</dbReference>
<dbReference type="Reactome" id="R-MMU-2467813">
    <property type="pathway name" value="Separation of Sister Chromatids"/>
</dbReference>
<dbReference type="Reactome" id="R-MMU-2500257">
    <property type="pathway name" value="Resolution of Sister Chromatid Cohesion"/>
</dbReference>
<dbReference type="Reactome" id="R-MMU-3108214">
    <property type="pathway name" value="SUMOylation of DNA damage response and repair proteins"/>
</dbReference>
<dbReference type="Reactome" id="R-MMU-3232142">
    <property type="pathway name" value="SUMOylation of ubiquitinylation proteins"/>
</dbReference>
<dbReference type="Reactome" id="R-MMU-3301854">
    <property type="pathway name" value="Nuclear Pore Complex (NPC) Disassembly"/>
</dbReference>
<dbReference type="Reactome" id="R-MMU-3371453">
    <property type="pathway name" value="Regulation of HSF1-mediated heat shock response"/>
</dbReference>
<dbReference type="Reactome" id="R-MMU-4085377">
    <property type="pathway name" value="SUMOylation of SUMOylation proteins"/>
</dbReference>
<dbReference type="Reactome" id="R-MMU-4551638">
    <property type="pathway name" value="SUMOylation of chromatin organization proteins"/>
</dbReference>
<dbReference type="Reactome" id="R-MMU-4570464">
    <property type="pathway name" value="SUMOylation of RNA binding proteins"/>
</dbReference>
<dbReference type="Reactome" id="R-MMU-4615885">
    <property type="pathway name" value="SUMOylation of DNA replication proteins"/>
</dbReference>
<dbReference type="Reactome" id="R-MMU-5578749">
    <property type="pathway name" value="Transcriptional regulation by small RNAs"/>
</dbReference>
<dbReference type="Reactome" id="R-MMU-5663220">
    <property type="pathway name" value="RHO GTPases Activate Formins"/>
</dbReference>
<dbReference type="Reactome" id="R-MMU-68877">
    <property type="pathway name" value="Mitotic Prometaphase"/>
</dbReference>
<dbReference type="Reactome" id="R-MMU-9615933">
    <property type="pathway name" value="Postmitotic nuclear pore complex (NPC) reformation"/>
</dbReference>
<dbReference type="Reactome" id="R-MMU-9648025">
    <property type="pathway name" value="EML4 and NUDC in mitotic spindle formation"/>
</dbReference>
<dbReference type="BioGRID-ORCS" id="269966">
    <property type="hits" value="8 hits in 47 CRISPR screens"/>
</dbReference>
<dbReference type="ChiTaRS" id="Nup98">
    <property type="organism name" value="mouse"/>
</dbReference>
<dbReference type="EvolutionaryTrace" id="Q6PFD9"/>
<dbReference type="PRO" id="PR:Q6PFD9"/>
<dbReference type="Proteomes" id="UP000000589">
    <property type="component" value="Unplaced"/>
</dbReference>
<dbReference type="RNAct" id="Q6PFD9">
    <property type="molecule type" value="protein"/>
</dbReference>
<dbReference type="GO" id="GO:0005635">
    <property type="term" value="C:nuclear envelope"/>
    <property type="evidence" value="ECO:0000250"/>
    <property type="project" value="UniProtKB"/>
</dbReference>
<dbReference type="GO" id="GO:0031965">
    <property type="term" value="C:nuclear membrane"/>
    <property type="evidence" value="ECO:0000250"/>
    <property type="project" value="UniProtKB"/>
</dbReference>
<dbReference type="GO" id="GO:0005643">
    <property type="term" value="C:nuclear pore"/>
    <property type="evidence" value="ECO:0007669"/>
    <property type="project" value="UniProtKB-SubCell"/>
</dbReference>
<dbReference type="GO" id="GO:0005654">
    <property type="term" value="C:nucleoplasm"/>
    <property type="evidence" value="ECO:0000250"/>
    <property type="project" value="UniProtKB"/>
</dbReference>
<dbReference type="GO" id="GO:0005634">
    <property type="term" value="C:nucleus"/>
    <property type="evidence" value="ECO:0000314"/>
    <property type="project" value="MGI"/>
</dbReference>
<dbReference type="GO" id="GO:1990904">
    <property type="term" value="C:ribonucleoprotein complex"/>
    <property type="evidence" value="ECO:0000250"/>
    <property type="project" value="UniProtKB"/>
</dbReference>
<dbReference type="GO" id="GO:1990841">
    <property type="term" value="F:promoter-specific chromatin binding"/>
    <property type="evidence" value="ECO:0000250"/>
    <property type="project" value="UniProtKB"/>
</dbReference>
<dbReference type="GO" id="GO:0008236">
    <property type="term" value="F:serine-type peptidase activity"/>
    <property type="evidence" value="ECO:0007669"/>
    <property type="project" value="UniProtKB-KW"/>
</dbReference>
<dbReference type="GO" id="GO:0017056">
    <property type="term" value="F:structural constituent of nuclear pore"/>
    <property type="evidence" value="ECO:0007669"/>
    <property type="project" value="InterPro"/>
</dbReference>
<dbReference type="GO" id="GO:0003713">
    <property type="term" value="F:transcription coactivator activity"/>
    <property type="evidence" value="ECO:0000250"/>
    <property type="project" value="UniProtKB"/>
</dbReference>
<dbReference type="GO" id="GO:0051028">
    <property type="term" value="P:mRNA transport"/>
    <property type="evidence" value="ECO:0007669"/>
    <property type="project" value="UniProtKB-KW"/>
</dbReference>
<dbReference type="GO" id="GO:0048026">
    <property type="term" value="P:positive regulation of mRNA splicing, via spliceosome"/>
    <property type="evidence" value="ECO:0000250"/>
    <property type="project" value="UniProtKB"/>
</dbReference>
<dbReference type="GO" id="GO:0015031">
    <property type="term" value="P:protein transport"/>
    <property type="evidence" value="ECO:0007669"/>
    <property type="project" value="UniProtKB-KW"/>
</dbReference>
<dbReference type="GO" id="GO:0006508">
    <property type="term" value="P:proteolysis"/>
    <property type="evidence" value="ECO:0007669"/>
    <property type="project" value="UniProtKB-KW"/>
</dbReference>
<dbReference type="FunFam" id="1.10.10.2360:FF:000001">
    <property type="entry name" value="Nuclear pore complex protein Nup98-Nup96"/>
    <property type="match status" value="1"/>
</dbReference>
<dbReference type="FunFam" id="1.25.40.690:FF:000001">
    <property type="entry name" value="Nuclear pore complex protein Nup98-Nup96"/>
    <property type="match status" value="1"/>
</dbReference>
<dbReference type="FunFam" id="3.30.1610.10:FF:000001">
    <property type="entry name" value="Nuclear pore complex protein Nup98-Nup96"/>
    <property type="match status" value="1"/>
</dbReference>
<dbReference type="Gene3D" id="1.10.10.2360">
    <property type="match status" value="1"/>
</dbReference>
<dbReference type="Gene3D" id="1.25.40.690">
    <property type="match status" value="1"/>
</dbReference>
<dbReference type="Gene3D" id="3.30.1610.10">
    <property type="entry name" value="Peptidase S59, nucleoporin"/>
    <property type="match status" value="1"/>
</dbReference>
<dbReference type="InterPro" id="IPR037665">
    <property type="entry name" value="Nucleoporin_S59-like"/>
</dbReference>
<dbReference type="InterPro" id="IPR007230">
    <property type="entry name" value="Nup98_auto-Pept-S59_dom"/>
</dbReference>
<dbReference type="InterPro" id="IPR036903">
    <property type="entry name" value="Nup98_auto-Pept-S59_dom_sf"/>
</dbReference>
<dbReference type="InterPro" id="IPR021967">
    <property type="entry name" value="Nup98_C"/>
</dbReference>
<dbReference type="PANTHER" id="PTHR23198:SF6">
    <property type="entry name" value="NUCLEAR PORE COMPLEX PROTEIN NUP98-NUP96"/>
    <property type="match status" value="1"/>
</dbReference>
<dbReference type="PANTHER" id="PTHR23198">
    <property type="entry name" value="NUCLEOPORIN"/>
    <property type="match status" value="1"/>
</dbReference>
<dbReference type="Pfam" id="PF04096">
    <property type="entry name" value="Nucleoporin2"/>
    <property type="match status" value="1"/>
</dbReference>
<dbReference type="Pfam" id="PF12110">
    <property type="entry name" value="Nup96"/>
    <property type="match status" value="1"/>
</dbReference>
<dbReference type="Pfam" id="PF21240">
    <property type="entry name" value="Nup98_GLEBS"/>
    <property type="match status" value="1"/>
</dbReference>
<dbReference type="SUPFAM" id="SSF82215">
    <property type="entry name" value="C-terminal autoproteolytic domain of nucleoporin nup98"/>
    <property type="match status" value="1"/>
</dbReference>
<dbReference type="PROSITE" id="PS51434">
    <property type="entry name" value="NUP_C"/>
    <property type="match status" value="1"/>
</dbReference>
<comment type="function">
    <text evidence="2">Plays a role in the nuclear pore complex (NPC) assembly and/or maintenance. NUP98 and NUP96 are involved in the bidirectional transport across the NPC. May anchor NUP153 and TPR to the NPC. In cooperation with DHX9, plays a role in transcription and alternative splicing activation of a subset of genes. Involved in the localization of DHX9 in discrete intranuclear foci (GLFG-body).</text>
</comment>
<comment type="subunit">
    <text evidence="2 5">Part of the nuclear pore complex (NPC). Interacts directly with NUP96. Part of the Nup160 subcomplex in the nuclear pore which is composed of NUP160, NUP133, NUP107 and NUP96; this complex plays a role in RNA export and in tethering NUP98 and NUP153 to the nucleus. Interacts with RAE1. Does not interact with TPR (By similarity). Interacts directly with NUP88 and NUP214, subunits of the cytoplasmic filaments of the NPC (PubMed:22480613). Interacts (via N-terminus) with DHX9 (via DRBM, OB-fold and RGG domains); this interaction occurs in a RNA-dependent manner and stimulates DHX9-mediated ATPase activity (By similarity).</text>
</comment>
<comment type="subcellular location">
    <subcellularLocation>
        <location evidence="2">Nucleus membrane</location>
        <topology evidence="2">Peripheral membrane protein</topology>
        <orientation evidence="2">Nucleoplasmic side</orientation>
    </subcellularLocation>
    <subcellularLocation>
        <location evidence="2">Nucleus</location>
        <location evidence="2">Nuclear pore complex</location>
    </subcellularLocation>
    <subcellularLocation>
        <location evidence="2">Nucleus</location>
        <location evidence="2">Nucleoplasm</location>
    </subcellularLocation>
    <text evidence="2">Localized to the nucleoplasmic side of the nuclear pore complex (NPC), at or near the nucleoplasmic basket. Dissociates from the dissasembled NPC structure early during prophase of mitosis. Colocalized with NUP153 and TPR to the nuclear basket of NPC. Colocalized with DHX9 in diffuse and discrete intranuclear foci (GLFG-body). Remains localized to the nuclear membrane after poliovirus (PV) infection.</text>
</comment>
<comment type="domain">
    <text evidence="1">Contains G-L-F-G repeats. The FG repeat domains have a direct role in the transport (By similarity).</text>
</comment>
<comment type="PTM">
    <text evidence="2">Autoproteolytically cleaved to yield Nup98 and Nup96 or Nup98 only, respectively. Cleaved Nup98 is necessary for the targeting of Nup98 to the nuclear pore and the interaction with Nup96.</text>
</comment>
<comment type="similarity">
    <text evidence="6">Belongs to the nucleoporin GLFG family.</text>
</comment>
<comment type="sequence caution" evidence="6">
    <conflict type="miscellaneous discrepancy">
        <sequence resource="EMBL-CDS" id="AAH50911"/>
    </conflict>
    <text>Contaminating sequence. Potential poly-A sequence.</text>
</comment>
<comment type="sequence caution" evidence="6">
    <conflict type="miscellaneous discrepancy">
        <sequence resource="EMBL-CDS" id="AAH57608"/>
    </conflict>
    <text>Contaminating sequence. Potential poly-A sequence.</text>
</comment>
<comment type="sequence caution" evidence="6">
    <conflict type="miscellaneous discrepancy">
        <sequence resource="EMBL-CDS" id="AAI12913"/>
    </conflict>
    <text>Contaminating sequence. Potential poly-A sequence.</text>
</comment>
<keyword id="KW-0002">3D-structure</keyword>
<keyword id="KW-0007">Acetylation</keyword>
<keyword id="KW-0068">Autocatalytic cleavage</keyword>
<keyword id="KW-0378">Hydrolase</keyword>
<keyword id="KW-1017">Isopeptide bond</keyword>
<keyword id="KW-0472">Membrane</keyword>
<keyword id="KW-0509">mRNA transport</keyword>
<keyword id="KW-0906">Nuclear pore complex</keyword>
<keyword id="KW-0539">Nucleus</keyword>
<keyword id="KW-0597">Phosphoprotein</keyword>
<keyword id="KW-0645">Protease</keyword>
<keyword id="KW-0653">Protein transport</keyword>
<keyword id="KW-1185">Reference proteome</keyword>
<keyword id="KW-0677">Repeat</keyword>
<keyword id="KW-0720">Serine protease</keyword>
<keyword id="KW-0811">Translocation</keyword>
<keyword id="KW-0813">Transport</keyword>
<keyword id="KW-0832">Ubl conjugation</keyword>
<gene>
    <name type="primary">Nup98</name>
</gene>
<accession>Q6PFD9</accession>
<accession>Q68G59</accession>
<reference key="1">
    <citation type="journal article" date="2009" name="PLoS Biol.">
        <title>Lineage-specific biology revealed by a finished genome assembly of the mouse.</title>
        <authorList>
            <person name="Church D.M."/>
            <person name="Goodstadt L."/>
            <person name="Hillier L.W."/>
            <person name="Zody M.C."/>
            <person name="Goldstein S."/>
            <person name="She X."/>
            <person name="Bult C.J."/>
            <person name="Agarwala R."/>
            <person name="Cherry J.L."/>
            <person name="DiCuccio M."/>
            <person name="Hlavina W."/>
            <person name="Kapustin Y."/>
            <person name="Meric P."/>
            <person name="Maglott D."/>
            <person name="Birtle Z."/>
            <person name="Marques A.C."/>
            <person name="Graves T."/>
            <person name="Zhou S."/>
            <person name="Teague B."/>
            <person name="Potamousis K."/>
            <person name="Churas C."/>
            <person name="Place M."/>
            <person name="Herschleb J."/>
            <person name="Runnheim R."/>
            <person name="Forrest D."/>
            <person name="Amos-Landgraf J."/>
            <person name="Schwartz D.C."/>
            <person name="Cheng Z."/>
            <person name="Lindblad-Toh K."/>
            <person name="Eichler E.E."/>
            <person name="Ponting C.P."/>
        </authorList>
    </citation>
    <scope>NUCLEOTIDE SEQUENCE [LARGE SCALE GENOMIC DNA]</scope>
    <source>
        <strain>C57BL/6J</strain>
    </source>
</reference>
<reference key="2">
    <citation type="journal article" date="2004" name="Genome Res.">
        <title>The status, quality, and expansion of the NIH full-length cDNA project: the Mammalian Gene Collection (MGC).</title>
        <authorList>
            <consortium name="The MGC Project Team"/>
        </authorList>
    </citation>
    <scope>NUCLEOTIDE SEQUENCE [LARGE SCALE MRNA]</scope>
    <source>
        <strain>C57BL/6J</strain>
        <tissue>Brain</tissue>
    </source>
</reference>
<reference key="3">
    <citation type="journal article" date="2007" name="Proc. Natl. Acad. Sci. U.S.A.">
        <title>Large-scale phosphorylation analysis of mouse liver.</title>
        <authorList>
            <person name="Villen J."/>
            <person name="Beausoleil S.A."/>
            <person name="Gerber S.A."/>
            <person name="Gygi S.P."/>
        </authorList>
    </citation>
    <scope>PHOSPHORYLATION [LARGE SCALE ANALYSIS] AT SER-888 AND SER-1027</scope>
    <scope>IDENTIFICATION BY MASS SPECTROMETRY [LARGE SCALE ANALYSIS]</scope>
    <source>
        <tissue>Liver</tissue>
    </source>
</reference>
<reference key="4">
    <citation type="journal article" date="2009" name="Immunity">
        <title>The phagosomal proteome in interferon-gamma-activated macrophages.</title>
        <authorList>
            <person name="Trost M."/>
            <person name="English L."/>
            <person name="Lemieux S."/>
            <person name="Courcelles M."/>
            <person name="Desjardins M."/>
            <person name="Thibault P."/>
        </authorList>
    </citation>
    <scope>PHOSPHORYLATION [LARGE SCALE ANALYSIS] AT SER-653; THR-670 AND SER-888</scope>
    <scope>IDENTIFICATION BY MASS SPECTROMETRY [LARGE SCALE ANALYSIS]</scope>
</reference>
<reference key="5">
    <citation type="journal article" date="2010" name="Cell">
        <title>A tissue-specific atlas of mouse protein phosphorylation and expression.</title>
        <authorList>
            <person name="Huttlin E.L."/>
            <person name="Jedrychowski M.P."/>
            <person name="Elias J.E."/>
            <person name="Goswami T."/>
            <person name="Rad R."/>
            <person name="Beausoleil S.A."/>
            <person name="Villen J."/>
            <person name="Haas W."/>
            <person name="Sowa M.E."/>
            <person name="Gygi S.P."/>
        </authorList>
    </citation>
    <scope>PHOSPHORYLATION [LARGE SCALE ANALYSIS] AT SER-608; SER-612; SER-618; SER-623; SER-653; SER-680; SER-888; SER-1027; SER-1059; SER-1063; SER-1328 AND THR-1771</scope>
    <scope>IDENTIFICATION BY MASS SPECTROMETRY [LARGE SCALE ANALYSIS]</scope>
    <source>
        <tissue>Brain</tissue>
        <tissue>Brown adipose tissue</tissue>
        <tissue>Heart</tissue>
        <tissue>Kidney</tissue>
        <tissue>Liver</tissue>
        <tissue>Lung</tissue>
        <tissue>Spleen</tissue>
        <tissue>Testis</tissue>
    </source>
</reference>
<reference key="6">
    <citation type="journal article" date="2012" name="J. Mol. Biol.">
        <title>Molecular basis for the anchoring of proto-oncoprotein Nup98 to the cytoplasmic face of the nuclear pore complex.</title>
        <authorList>
            <person name="Stuwe T."/>
            <person name="von Borzyskowski L.S."/>
            <person name="Davenport A.M."/>
            <person name="Hoelz A."/>
        </authorList>
    </citation>
    <scope>X-RAY CRYSTALLOGRAPHY (3.40 ANGSTROMS) OF 732-880 IN COMPLEX WITH YEAST NUP82 AND NUP159</scope>
    <scope>INTERACTION WITH NUP88</scope>
    <scope>MUTAGENESIS OF LYS-831</scope>
    <scope>SUBUNIT</scope>
</reference>